<dbReference type="EC" id="2.1.1.190" evidence="1"/>
<dbReference type="EMBL" id="AJ749949">
    <property type="protein sequence ID" value="CAG45338.1"/>
    <property type="molecule type" value="Genomic_DNA"/>
</dbReference>
<dbReference type="RefSeq" id="WP_011242253.1">
    <property type="nucleotide sequence ID" value="NZ_CP010290.1"/>
</dbReference>
<dbReference type="RefSeq" id="YP_169721.1">
    <property type="nucleotide sequence ID" value="NC_006570.2"/>
</dbReference>
<dbReference type="SMR" id="Q5NGX1"/>
<dbReference type="STRING" id="177416.FTT_0705"/>
<dbReference type="DNASU" id="3191516"/>
<dbReference type="EnsemblBacteria" id="CAG45338">
    <property type="protein sequence ID" value="CAG45338"/>
    <property type="gene ID" value="FTT_0705"/>
</dbReference>
<dbReference type="KEGG" id="ftu:FTT_0705"/>
<dbReference type="eggNOG" id="COG2265">
    <property type="taxonomic scope" value="Bacteria"/>
</dbReference>
<dbReference type="OrthoDB" id="9804590at2"/>
<dbReference type="Proteomes" id="UP000001174">
    <property type="component" value="Chromosome"/>
</dbReference>
<dbReference type="GO" id="GO:0051539">
    <property type="term" value="F:4 iron, 4 sulfur cluster binding"/>
    <property type="evidence" value="ECO:0007669"/>
    <property type="project" value="UniProtKB-KW"/>
</dbReference>
<dbReference type="GO" id="GO:0005506">
    <property type="term" value="F:iron ion binding"/>
    <property type="evidence" value="ECO:0007669"/>
    <property type="project" value="UniProtKB-UniRule"/>
</dbReference>
<dbReference type="GO" id="GO:0003723">
    <property type="term" value="F:RNA binding"/>
    <property type="evidence" value="ECO:0007669"/>
    <property type="project" value="InterPro"/>
</dbReference>
<dbReference type="GO" id="GO:0070041">
    <property type="term" value="F:rRNA (uridine-C5-)-methyltransferase activity"/>
    <property type="evidence" value="ECO:0007669"/>
    <property type="project" value="UniProtKB-UniRule"/>
</dbReference>
<dbReference type="GO" id="GO:0070475">
    <property type="term" value="P:rRNA base methylation"/>
    <property type="evidence" value="ECO:0007669"/>
    <property type="project" value="TreeGrafter"/>
</dbReference>
<dbReference type="CDD" id="cd02440">
    <property type="entry name" value="AdoMet_MTases"/>
    <property type="match status" value="1"/>
</dbReference>
<dbReference type="FunFam" id="2.40.50.140:FF:000097">
    <property type="entry name" value="23S rRNA (uracil(1939)-C(5))-methyltransferase RlmD"/>
    <property type="match status" value="1"/>
</dbReference>
<dbReference type="Gene3D" id="2.40.50.1070">
    <property type="match status" value="1"/>
</dbReference>
<dbReference type="Gene3D" id="2.40.50.140">
    <property type="entry name" value="Nucleic acid-binding proteins"/>
    <property type="match status" value="1"/>
</dbReference>
<dbReference type="Gene3D" id="3.40.50.150">
    <property type="entry name" value="Vaccinia Virus protein VP39"/>
    <property type="match status" value="1"/>
</dbReference>
<dbReference type="HAMAP" id="MF_01010">
    <property type="entry name" value="23SrRNA_methyltr_RlmD"/>
    <property type="match status" value="1"/>
</dbReference>
<dbReference type="InterPro" id="IPR001566">
    <property type="entry name" value="23S_rRNA_MeTrfase_RlmD"/>
</dbReference>
<dbReference type="InterPro" id="IPR030391">
    <property type="entry name" value="MeTrfase_TrmA_CS"/>
</dbReference>
<dbReference type="InterPro" id="IPR012340">
    <property type="entry name" value="NA-bd_OB-fold"/>
</dbReference>
<dbReference type="InterPro" id="IPR029063">
    <property type="entry name" value="SAM-dependent_MTases_sf"/>
</dbReference>
<dbReference type="InterPro" id="IPR002792">
    <property type="entry name" value="TRAM_dom"/>
</dbReference>
<dbReference type="InterPro" id="IPR010280">
    <property type="entry name" value="U5_MeTrfase_fam"/>
</dbReference>
<dbReference type="NCBIfam" id="NF009639">
    <property type="entry name" value="PRK13168.1"/>
    <property type="match status" value="1"/>
</dbReference>
<dbReference type="NCBIfam" id="TIGR00479">
    <property type="entry name" value="rumA"/>
    <property type="match status" value="1"/>
</dbReference>
<dbReference type="PANTHER" id="PTHR11061:SF49">
    <property type="entry name" value="23S RRNA (URACIL(1939)-C(5))-METHYLTRANSFERASE RLMD"/>
    <property type="match status" value="1"/>
</dbReference>
<dbReference type="PANTHER" id="PTHR11061">
    <property type="entry name" value="RNA M5U METHYLTRANSFERASE"/>
    <property type="match status" value="1"/>
</dbReference>
<dbReference type="Pfam" id="PF01938">
    <property type="entry name" value="TRAM"/>
    <property type="match status" value="1"/>
</dbReference>
<dbReference type="Pfam" id="PF05958">
    <property type="entry name" value="tRNA_U5-meth_tr"/>
    <property type="match status" value="1"/>
</dbReference>
<dbReference type="SUPFAM" id="SSF50249">
    <property type="entry name" value="Nucleic acid-binding proteins"/>
    <property type="match status" value="1"/>
</dbReference>
<dbReference type="SUPFAM" id="SSF53335">
    <property type="entry name" value="S-adenosyl-L-methionine-dependent methyltransferases"/>
    <property type="match status" value="1"/>
</dbReference>
<dbReference type="PROSITE" id="PS51687">
    <property type="entry name" value="SAM_MT_RNA_M5U"/>
    <property type="match status" value="1"/>
</dbReference>
<dbReference type="PROSITE" id="PS50926">
    <property type="entry name" value="TRAM"/>
    <property type="match status" value="1"/>
</dbReference>
<dbReference type="PROSITE" id="PS01231">
    <property type="entry name" value="TRMA_2"/>
    <property type="match status" value="1"/>
</dbReference>
<organism>
    <name type="scientific">Francisella tularensis subsp. tularensis (strain SCHU S4 / Schu 4)</name>
    <dbReference type="NCBI Taxonomy" id="177416"/>
    <lineage>
        <taxon>Bacteria</taxon>
        <taxon>Pseudomonadati</taxon>
        <taxon>Pseudomonadota</taxon>
        <taxon>Gammaproteobacteria</taxon>
        <taxon>Thiotrichales</taxon>
        <taxon>Francisellaceae</taxon>
        <taxon>Francisella</taxon>
    </lineage>
</organism>
<reference key="1">
    <citation type="journal article" date="2005" name="Nat. Genet.">
        <title>The complete genome sequence of Francisella tularensis, the causative agent of tularemia.</title>
        <authorList>
            <person name="Larsson P."/>
            <person name="Oyston P.C.F."/>
            <person name="Chain P."/>
            <person name="Chu M.C."/>
            <person name="Duffield M."/>
            <person name="Fuxelius H.-H."/>
            <person name="Garcia E."/>
            <person name="Haelltorp G."/>
            <person name="Johansson D."/>
            <person name="Isherwood K.E."/>
            <person name="Karp P.D."/>
            <person name="Larsson E."/>
            <person name="Liu Y."/>
            <person name="Michell S."/>
            <person name="Prior J."/>
            <person name="Prior R."/>
            <person name="Malfatti S."/>
            <person name="Sjoestedt A."/>
            <person name="Svensson K."/>
            <person name="Thompson N."/>
            <person name="Vergez L."/>
            <person name="Wagg J.K."/>
            <person name="Wren B.W."/>
            <person name="Lindler L.E."/>
            <person name="Andersson S.G.E."/>
            <person name="Forsman M."/>
            <person name="Titball R.W."/>
        </authorList>
    </citation>
    <scope>NUCLEOTIDE SEQUENCE [LARGE SCALE GENOMIC DNA]</scope>
    <source>
        <strain>SCHU S4 / Schu 4</strain>
    </source>
</reference>
<accession>Q5NGX1</accession>
<keyword id="KW-0004">4Fe-4S</keyword>
<keyword id="KW-0408">Iron</keyword>
<keyword id="KW-0411">Iron-sulfur</keyword>
<keyword id="KW-0479">Metal-binding</keyword>
<keyword id="KW-0489">Methyltransferase</keyword>
<keyword id="KW-1185">Reference proteome</keyword>
<keyword id="KW-0698">rRNA processing</keyword>
<keyword id="KW-0949">S-adenosyl-L-methionine</keyword>
<keyword id="KW-0808">Transferase</keyword>
<gene>
    <name evidence="1" type="primary">rlmD</name>
    <name type="synonym">rumA</name>
    <name type="ordered locus">FTT_0705</name>
</gene>
<comment type="function">
    <text evidence="1">Catalyzes the formation of 5-methyl-uridine at position 1939 (m5U1939) in 23S rRNA.</text>
</comment>
<comment type="catalytic activity">
    <reaction evidence="1">
        <text>uridine(1939) in 23S rRNA + S-adenosyl-L-methionine = 5-methyluridine(1939) in 23S rRNA + S-adenosyl-L-homocysteine + H(+)</text>
        <dbReference type="Rhea" id="RHEA:42908"/>
        <dbReference type="Rhea" id="RHEA-COMP:10278"/>
        <dbReference type="Rhea" id="RHEA-COMP:10279"/>
        <dbReference type="ChEBI" id="CHEBI:15378"/>
        <dbReference type="ChEBI" id="CHEBI:57856"/>
        <dbReference type="ChEBI" id="CHEBI:59789"/>
        <dbReference type="ChEBI" id="CHEBI:65315"/>
        <dbReference type="ChEBI" id="CHEBI:74447"/>
        <dbReference type="EC" id="2.1.1.190"/>
    </reaction>
</comment>
<comment type="similarity">
    <text evidence="1">Belongs to the class I-like SAM-binding methyltransferase superfamily. RNA M5U methyltransferase family. RlmD subfamily.</text>
</comment>
<name>RLMD_FRATT</name>
<feature type="chain" id="PRO_0000282044" description="23S rRNA (uracil(1939)-C(5))-methyltransferase RlmD">
    <location>
        <begin position="1"/>
        <end position="449"/>
    </location>
</feature>
<feature type="domain" description="TRAM" evidence="1">
    <location>
        <begin position="1"/>
        <end position="66"/>
    </location>
</feature>
<feature type="active site" description="Nucleophile" evidence="1">
    <location>
        <position position="405"/>
    </location>
</feature>
<feature type="binding site" evidence="1">
    <location>
        <position position="79"/>
    </location>
    <ligand>
        <name>[4Fe-4S] cluster</name>
        <dbReference type="ChEBI" id="CHEBI:49883"/>
    </ligand>
</feature>
<feature type="binding site" evidence="1">
    <location>
        <position position="85"/>
    </location>
    <ligand>
        <name>[4Fe-4S] cluster</name>
        <dbReference type="ChEBI" id="CHEBI:49883"/>
    </ligand>
</feature>
<feature type="binding site" evidence="1">
    <location>
        <position position="88"/>
    </location>
    <ligand>
        <name>[4Fe-4S] cluster</name>
        <dbReference type="ChEBI" id="CHEBI:49883"/>
    </ligand>
</feature>
<feature type="binding site" evidence="1">
    <location>
        <position position="169"/>
    </location>
    <ligand>
        <name>[4Fe-4S] cluster</name>
        <dbReference type="ChEBI" id="CHEBI:49883"/>
    </ligand>
</feature>
<feature type="binding site" evidence="1">
    <location>
        <position position="280"/>
    </location>
    <ligand>
        <name>S-adenosyl-L-methionine</name>
        <dbReference type="ChEBI" id="CHEBI:59789"/>
    </ligand>
</feature>
<feature type="binding site" evidence="1">
    <location>
        <position position="309"/>
    </location>
    <ligand>
        <name>S-adenosyl-L-methionine</name>
        <dbReference type="ChEBI" id="CHEBI:59789"/>
    </ligand>
</feature>
<feature type="binding site" evidence="1">
    <location>
        <position position="314"/>
    </location>
    <ligand>
        <name>S-adenosyl-L-methionine</name>
        <dbReference type="ChEBI" id="CHEBI:59789"/>
    </ligand>
</feature>
<feature type="binding site" evidence="1">
    <location>
        <position position="330"/>
    </location>
    <ligand>
        <name>S-adenosyl-L-methionine</name>
        <dbReference type="ChEBI" id="CHEBI:59789"/>
    </ligand>
</feature>
<feature type="binding site" evidence="1">
    <location>
        <position position="357"/>
    </location>
    <ligand>
        <name>S-adenosyl-L-methionine</name>
        <dbReference type="ChEBI" id="CHEBI:59789"/>
    </ligand>
</feature>
<feature type="binding site" evidence="1">
    <location>
        <position position="379"/>
    </location>
    <ligand>
        <name>S-adenosyl-L-methionine</name>
        <dbReference type="ChEBI" id="CHEBI:59789"/>
    </ligand>
</feature>
<sequence>MGRSRHHNKLKEGIFEAEITALSHDGRGIAKVDGKTTFIPFTLPGEVVKFEYTFTKAKFDEAKVVEYVKKSSNRVNPPCDHFQICRGCSLQHMSTDAQIEHKQQTLINQLKYIGNGVEPENILPPLRTSNTEGYRNKARLGVRYVSKKGKILVGFRERNGRFLADIDKCIVLNPLVGDKITEISSFIETLSIYQHIAQLEIAIDDTRPAMIVRHLEPFTNEDLEKLRSFAQENNYWIYLQSKGPDTIFRLYPQGDVEPKKLSYQPAAGIDIGFEPNDFTQVNNDINKKMIKRAIELLDISENDSIIDLFCGLGNFTLPISQHAKTVIGVEGEPTMVKRAKETADNNNITNVNFYAANLFESFEDKEWFNNFEYNKMLLDPPRAGAQEVCNNIEKFNVKRIVYVSCDTAALARDAGILVNTKGYKLISAGVMDMFPHTMHVESIAVFEKI</sequence>
<protein>
    <recommendedName>
        <fullName evidence="1">23S rRNA (uracil(1939)-C(5))-methyltransferase RlmD</fullName>
        <ecNumber evidence="1">2.1.1.190</ecNumber>
    </recommendedName>
    <alternativeName>
        <fullName evidence="1">23S rRNA(m5U1939)-methyltransferase</fullName>
    </alternativeName>
</protein>
<proteinExistence type="inferred from homology"/>
<evidence type="ECO:0000255" key="1">
    <source>
        <dbReference type="HAMAP-Rule" id="MF_01010"/>
    </source>
</evidence>